<sequence>MDQLIQLVEATQQRNDIPEVRPGDTVRIQLKVIEGEKERLQAFEGVVIGDKGMGASKTITVRKISHGVGVERIIPVNSPNIESVTVVRSGKARRAKLFYLRKRTGKAALKVKERKSASAEA</sequence>
<dbReference type="EMBL" id="AE006470">
    <property type="protein sequence ID" value="AAM72396.1"/>
    <property type="molecule type" value="Genomic_DNA"/>
</dbReference>
<dbReference type="RefSeq" id="NP_662054.1">
    <property type="nucleotide sequence ID" value="NC_002932.3"/>
</dbReference>
<dbReference type="RefSeq" id="WP_010932835.1">
    <property type="nucleotide sequence ID" value="NC_002932.3"/>
</dbReference>
<dbReference type="SMR" id="Q8KD91"/>
<dbReference type="STRING" id="194439.CT1163"/>
<dbReference type="EnsemblBacteria" id="AAM72396">
    <property type="protein sequence ID" value="AAM72396"/>
    <property type="gene ID" value="CT1163"/>
</dbReference>
<dbReference type="KEGG" id="cte:CT1163"/>
<dbReference type="PATRIC" id="fig|194439.7.peg.1058"/>
<dbReference type="eggNOG" id="COG0335">
    <property type="taxonomic scope" value="Bacteria"/>
</dbReference>
<dbReference type="HOGENOM" id="CLU_103507_2_2_10"/>
<dbReference type="OrthoDB" id="9803541at2"/>
<dbReference type="Proteomes" id="UP000001007">
    <property type="component" value="Chromosome"/>
</dbReference>
<dbReference type="GO" id="GO:0022625">
    <property type="term" value="C:cytosolic large ribosomal subunit"/>
    <property type="evidence" value="ECO:0007669"/>
    <property type="project" value="TreeGrafter"/>
</dbReference>
<dbReference type="GO" id="GO:0003735">
    <property type="term" value="F:structural constituent of ribosome"/>
    <property type="evidence" value="ECO:0007669"/>
    <property type="project" value="InterPro"/>
</dbReference>
<dbReference type="GO" id="GO:0006412">
    <property type="term" value="P:translation"/>
    <property type="evidence" value="ECO:0007669"/>
    <property type="project" value="UniProtKB-UniRule"/>
</dbReference>
<dbReference type="FunFam" id="2.30.30.790:FF:000001">
    <property type="entry name" value="50S ribosomal protein L19"/>
    <property type="match status" value="1"/>
</dbReference>
<dbReference type="Gene3D" id="2.30.30.790">
    <property type="match status" value="1"/>
</dbReference>
<dbReference type="HAMAP" id="MF_00402">
    <property type="entry name" value="Ribosomal_bL19"/>
    <property type="match status" value="1"/>
</dbReference>
<dbReference type="InterPro" id="IPR001857">
    <property type="entry name" value="Ribosomal_bL19"/>
</dbReference>
<dbReference type="InterPro" id="IPR018257">
    <property type="entry name" value="Ribosomal_bL19_CS"/>
</dbReference>
<dbReference type="InterPro" id="IPR038657">
    <property type="entry name" value="Ribosomal_bL19_sf"/>
</dbReference>
<dbReference type="InterPro" id="IPR008991">
    <property type="entry name" value="Translation_prot_SH3-like_sf"/>
</dbReference>
<dbReference type="NCBIfam" id="TIGR01024">
    <property type="entry name" value="rplS_bact"/>
    <property type="match status" value="1"/>
</dbReference>
<dbReference type="PANTHER" id="PTHR15680:SF9">
    <property type="entry name" value="LARGE RIBOSOMAL SUBUNIT PROTEIN BL19M"/>
    <property type="match status" value="1"/>
</dbReference>
<dbReference type="PANTHER" id="PTHR15680">
    <property type="entry name" value="RIBOSOMAL PROTEIN L19"/>
    <property type="match status" value="1"/>
</dbReference>
<dbReference type="Pfam" id="PF01245">
    <property type="entry name" value="Ribosomal_L19"/>
    <property type="match status" value="1"/>
</dbReference>
<dbReference type="PIRSF" id="PIRSF002191">
    <property type="entry name" value="Ribosomal_L19"/>
    <property type="match status" value="1"/>
</dbReference>
<dbReference type="PRINTS" id="PR00061">
    <property type="entry name" value="RIBOSOMALL19"/>
</dbReference>
<dbReference type="SUPFAM" id="SSF50104">
    <property type="entry name" value="Translation proteins SH3-like domain"/>
    <property type="match status" value="1"/>
</dbReference>
<dbReference type="PROSITE" id="PS01015">
    <property type="entry name" value="RIBOSOMAL_L19"/>
    <property type="match status" value="1"/>
</dbReference>
<proteinExistence type="inferred from homology"/>
<organism>
    <name type="scientific">Chlorobaculum tepidum (strain ATCC 49652 / DSM 12025 / NBRC 103806 / TLS)</name>
    <name type="common">Chlorobium tepidum</name>
    <dbReference type="NCBI Taxonomy" id="194439"/>
    <lineage>
        <taxon>Bacteria</taxon>
        <taxon>Pseudomonadati</taxon>
        <taxon>Chlorobiota</taxon>
        <taxon>Chlorobiia</taxon>
        <taxon>Chlorobiales</taxon>
        <taxon>Chlorobiaceae</taxon>
        <taxon>Chlorobaculum</taxon>
    </lineage>
</organism>
<reference key="1">
    <citation type="journal article" date="2002" name="Proc. Natl. Acad. Sci. U.S.A.">
        <title>The complete genome sequence of Chlorobium tepidum TLS, a photosynthetic, anaerobic, green-sulfur bacterium.</title>
        <authorList>
            <person name="Eisen J.A."/>
            <person name="Nelson K.E."/>
            <person name="Paulsen I.T."/>
            <person name="Heidelberg J.F."/>
            <person name="Wu M."/>
            <person name="Dodson R.J."/>
            <person name="DeBoy R.T."/>
            <person name="Gwinn M.L."/>
            <person name="Nelson W.C."/>
            <person name="Haft D.H."/>
            <person name="Hickey E.K."/>
            <person name="Peterson J.D."/>
            <person name="Durkin A.S."/>
            <person name="Kolonay J.F."/>
            <person name="Yang F."/>
            <person name="Holt I.E."/>
            <person name="Umayam L.A."/>
            <person name="Mason T.M."/>
            <person name="Brenner M."/>
            <person name="Shea T.P."/>
            <person name="Parksey D.S."/>
            <person name="Nierman W.C."/>
            <person name="Feldblyum T.V."/>
            <person name="Hansen C.L."/>
            <person name="Craven M.B."/>
            <person name="Radune D."/>
            <person name="Vamathevan J.J."/>
            <person name="Khouri H.M."/>
            <person name="White O."/>
            <person name="Gruber T.M."/>
            <person name="Ketchum K.A."/>
            <person name="Venter J.C."/>
            <person name="Tettelin H."/>
            <person name="Bryant D.A."/>
            <person name="Fraser C.M."/>
        </authorList>
    </citation>
    <scope>NUCLEOTIDE SEQUENCE [LARGE SCALE GENOMIC DNA]</scope>
    <source>
        <strain>ATCC 49652 / DSM 12025 / NBRC 103806 / TLS</strain>
    </source>
</reference>
<evidence type="ECO:0000255" key="1">
    <source>
        <dbReference type="HAMAP-Rule" id="MF_00402"/>
    </source>
</evidence>
<evidence type="ECO:0000305" key="2"/>
<name>RL19_CHLTE</name>
<comment type="function">
    <text evidence="1">This protein is located at the 30S-50S ribosomal subunit interface and may play a role in the structure and function of the aminoacyl-tRNA binding site.</text>
</comment>
<comment type="similarity">
    <text evidence="1">Belongs to the bacterial ribosomal protein bL19 family.</text>
</comment>
<feature type="chain" id="PRO_0000163438" description="Large ribosomal subunit protein bL19">
    <location>
        <begin position="1"/>
        <end position="121"/>
    </location>
</feature>
<accession>Q8KD91</accession>
<keyword id="KW-1185">Reference proteome</keyword>
<keyword id="KW-0687">Ribonucleoprotein</keyword>
<keyword id="KW-0689">Ribosomal protein</keyword>
<protein>
    <recommendedName>
        <fullName evidence="1">Large ribosomal subunit protein bL19</fullName>
    </recommendedName>
    <alternativeName>
        <fullName evidence="2">50S ribosomal protein L19</fullName>
    </alternativeName>
</protein>
<gene>
    <name evidence="1" type="primary">rplS</name>
    <name type="ordered locus">CT1163</name>
</gene>